<keyword id="KW-0217">Developmental protein</keyword>
<keyword id="KW-0238">DNA-binding</keyword>
<keyword id="KW-0371">Homeobox</keyword>
<keyword id="KW-0539">Nucleus</keyword>
<keyword id="KW-1185">Reference proteome</keyword>
<keyword id="KW-0804">Transcription</keyword>
<keyword id="KW-0805">Transcription regulation</keyword>
<accession>P14158</accession>
<proteinExistence type="inferred from homology"/>
<reference key="1">
    <citation type="journal article" date="1988" name="Gene">
        <title>Molecular cloning and characterization of ovine homeo-box-containing genes.</title>
        <authorList>
            <person name="Choi C.-L."/>
            <person name="Hudson P."/>
            <person name="Stauder A."/>
            <person name="Pietersz G."/>
            <person name="Brandon M."/>
        </authorList>
    </citation>
    <scope>NUCLEOTIDE SEQUENCE [GENOMIC DNA]</scope>
</reference>
<sequence>RGPDAPGPASKRVRTAYTSAQLVELEKEFHFNRYLWRRRRVEMANP</sequence>
<organism>
    <name type="scientific">Ovis aries</name>
    <name type="common">Sheep</name>
    <dbReference type="NCBI Taxonomy" id="9940"/>
    <lineage>
        <taxon>Eukaryota</taxon>
        <taxon>Metazoa</taxon>
        <taxon>Chordata</taxon>
        <taxon>Craniata</taxon>
        <taxon>Vertebrata</taxon>
        <taxon>Euteleostomi</taxon>
        <taxon>Mammalia</taxon>
        <taxon>Eutheria</taxon>
        <taxon>Laurasiatheria</taxon>
        <taxon>Artiodactyla</taxon>
        <taxon>Ruminantia</taxon>
        <taxon>Pecora</taxon>
        <taxon>Bovidae</taxon>
        <taxon>Caprinae</taxon>
        <taxon>Ovis</taxon>
    </lineage>
</organism>
<name>HXD3_SHEEP</name>
<evidence type="ECO:0000250" key="1"/>
<evidence type="ECO:0000255" key="2">
    <source>
        <dbReference type="PROSITE-ProRule" id="PRU00108"/>
    </source>
</evidence>
<evidence type="ECO:0000305" key="3"/>
<gene>
    <name type="primary">HOXD3</name>
    <name type="synonym">HOX-7.1</name>
</gene>
<dbReference type="EMBL" id="M29538">
    <property type="protein sequence ID" value="AAA31538.1"/>
    <property type="molecule type" value="Genomic_DNA"/>
</dbReference>
<dbReference type="PIR" id="A30474">
    <property type="entry name" value="A30474"/>
</dbReference>
<dbReference type="SMR" id="P14158"/>
<dbReference type="PaxDb" id="9940-ENSOARP00000018753"/>
<dbReference type="eggNOG" id="KOG0489">
    <property type="taxonomic scope" value="Eukaryota"/>
</dbReference>
<dbReference type="Proteomes" id="UP000002356">
    <property type="component" value="Unplaced"/>
</dbReference>
<dbReference type="GO" id="GO:0005634">
    <property type="term" value="C:nucleus"/>
    <property type="evidence" value="ECO:0007669"/>
    <property type="project" value="UniProtKB-SubCell"/>
</dbReference>
<dbReference type="GO" id="GO:0000981">
    <property type="term" value="F:DNA-binding transcription factor activity, RNA polymerase II-specific"/>
    <property type="evidence" value="ECO:0007669"/>
    <property type="project" value="TreeGrafter"/>
</dbReference>
<dbReference type="GO" id="GO:0000978">
    <property type="term" value="F:RNA polymerase II cis-regulatory region sequence-specific DNA binding"/>
    <property type="evidence" value="ECO:0007669"/>
    <property type="project" value="TreeGrafter"/>
</dbReference>
<dbReference type="GO" id="GO:0009952">
    <property type="term" value="P:anterior/posterior pattern specification"/>
    <property type="evidence" value="ECO:0007669"/>
    <property type="project" value="TreeGrafter"/>
</dbReference>
<dbReference type="GO" id="GO:0048704">
    <property type="term" value="P:embryonic skeletal system morphogenesis"/>
    <property type="evidence" value="ECO:0007669"/>
    <property type="project" value="TreeGrafter"/>
</dbReference>
<dbReference type="CDD" id="cd00086">
    <property type="entry name" value="homeodomain"/>
    <property type="match status" value="1"/>
</dbReference>
<dbReference type="Gene3D" id="1.10.10.60">
    <property type="entry name" value="Homeodomain-like"/>
    <property type="match status" value="1"/>
</dbReference>
<dbReference type="InterPro" id="IPR001356">
    <property type="entry name" value="HD"/>
</dbReference>
<dbReference type="InterPro" id="IPR009057">
    <property type="entry name" value="Homeodomain-like_sf"/>
</dbReference>
<dbReference type="PANTHER" id="PTHR45664:SF5">
    <property type="entry name" value="HOMEOBOX PROTEIN HOX-D3"/>
    <property type="match status" value="1"/>
</dbReference>
<dbReference type="PANTHER" id="PTHR45664">
    <property type="entry name" value="PROTEIN ZERKNUELLT 1-RELATED"/>
    <property type="match status" value="1"/>
</dbReference>
<dbReference type="Pfam" id="PF00046">
    <property type="entry name" value="Homeodomain"/>
    <property type="match status" value="1"/>
</dbReference>
<dbReference type="SUPFAM" id="SSF46689">
    <property type="entry name" value="Homeodomain-like"/>
    <property type="match status" value="1"/>
</dbReference>
<dbReference type="PROSITE" id="PS50071">
    <property type="entry name" value="HOMEOBOX_2"/>
    <property type="match status" value="1"/>
</dbReference>
<comment type="function">
    <text evidence="1">Sequence-specific transcription factor which is part of a developmental regulatory system that provides cells with specific positional identities on the anterior-posterior axis.</text>
</comment>
<comment type="subcellular location">
    <subcellularLocation>
        <location evidence="2">Nucleus</location>
    </subcellularLocation>
</comment>
<comment type="similarity">
    <text evidence="3">Belongs to the Antp homeobox family.</text>
</comment>
<protein>
    <recommendedName>
        <fullName>Homeobox protein Hox-D3</fullName>
    </recommendedName>
    <alternativeName>
        <fullName>Homeobox protein Hox-7.1</fullName>
        <shortName>OHox-7.1</shortName>
    </alternativeName>
</protein>
<feature type="chain" id="PRO_0000200207" description="Homeobox protein Hox-D3">
    <location>
        <begin position="1" status="less than"/>
        <end position="46" status="greater than"/>
    </location>
</feature>
<feature type="DNA-binding region" description="Homeobox" evidence="2">
    <location>
        <begin position="1" status="less than"/>
        <end position="46" status="greater than"/>
    </location>
</feature>
<feature type="non-terminal residue">
    <location>
        <position position="1"/>
    </location>
</feature>
<feature type="non-terminal residue">
    <location>
        <position position="46"/>
    </location>
</feature>